<keyword id="KW-1185">Reference proteome</keyword>
<feature type="chain" id="PRO_0000385091" description="Uncharacterized protein ORF69">
    <location>
        <begin position="1"/>
        <end position="463"/>
    </location>
</feature>
<sequence length="463" mass="53185">MNLLSFTTIPTHVCAFNKRKIGDETNLEGKGYKSYASDEFMEWMTTNSDTKSEKASRVYNSLKEFSEGVDTNGDPVKLSKLDFTENHMDDIGENPDYQPVSLHRLNRQAMKLPNVALAMTRSIYLNDPGILTGKDMVELYHGFHMDGEEVSNNKEAKSTCELLANIDDSKKLNTAVNFLGKEQLLNMTNECNKSVGGDGYTNKPIKIKDSDLLKHKLERQVKESPINTTRIMNEIICQEIEPNYYTSLFLHKTKDWELIEDTLDTSDMEYMVELFEQHVREKTINLLDGRMGGMREELYYTVLPPRFRLKAQDSTPFIDIYAQHLLGVDSGMIRALYEICTFNDVKKITNSTVLLKKMTTTLKQIEKTQQNLLAQWGRLMWFVIYTELIRNTGDDLVTLKIKPTDKPEEISNAFVSIKLSLYHHKGHYYCLVDDKGNGFVSKDFRVLLARVHKELQTMSKNSA</sequence>
<reference key="1">
    <citation type="journal article" date="2005" name="J. Gen. Virol.">
        <title>A novel class of herpesvirus with bivalve hosts.</title>
        <authorList>
            <person name="Davison A.J."/>
            <person name="Trus B.L."/>
            <person name="Cheng N."/>
            <person name="Steven A.C."/>
            <person name="Watson M.S."/>
            <person name="Cunningham C."/>
            <person name="Le Deuff R.M."/>
            <person name="Renault T."/>
        </authorList>
    </citation>
    <scope>NUCLEOTIDE SEQUENCE [LARGE SCALE GENOMIC DNA]</scope>
</reference>
<protein>
    <recommendedName>
        <fullName>Uncharacterized protein ORF69</fullName>
    </recommendedName>
</protein>
<organism>
    <name type="scientific">Ostreid herpesvirus 1 (isolate France)</name>
    <name type="common">OsHV-1</name>
    <name type="synonym">Pacific oyster herpesvirus</name>
    <dbReference type="NCBI Taxonomy" id="654903"/>
    <lineage>
        <taxon>Viruses</taxon>
        <taxon>Duplodnaviria</taxon>
        <taxon>Heunggongvirae</taxon>
        <taxon>Peploviricota</taxon>
        <taxon>Herviviricetes</taxon>
        <taxon>Herpesvirales</taxon>
        <taxon>Malacoherpesviridae</taxon>
        <taxon>Ostreavirus</taxon>
        <taxon>Ostreavirus ostreidmalaco1</taxon>
        <taxon>Ostreid herpesvirus 1</taxon>
    </lineage>
</organism>
<name>Y069_OSHVF</name>
<gene>
    <name type="ORF">ORF69</name>
</gene>
<accession>Q6R7F9</accession>
<proteinExistence type="predicted"/>
<dbReference type="EMBL" id="AY509253">
    <property type="protein sequence ID" value="AAS00956.1"/>
    <property type="molecule type" value="Genomic_DNA"/>
</dbReference>
<dbReference type="RefSeq" id="YP_024609.1">
    <property type="nucleotide sequence ID" value="NC_005881.2"/>
</dbReference>
<dbReference type="KEGG" id="vg:2948225"/>
<dbReference type="Proteomes" id="UP000007021">
    <property type="component" value="Segment"/>
</dbReference>
<organismHost>
    <name type="scientific">Magallana gigas</name>
    <name type="common">Pacific oyster</name>
    <name type="synonym">Crassostrea gigas</name>
    <dbReference type="NCBI Taxonomy" id="29159"/>
</organismHost>
<organismHost>
    <name type="scientific">Pecten maximus</name>
    <name type="common">King scallop</name>
    <name type="synonym">Pilgrim's clam</name>
    <dbReference type="NCBI Taxonomy" id="6579"/>
</organismHost>